<gene>
    <name evidence="1" type="primary">thyA</name>
    <name type="ordered locus">ECIAI1_2935</name>
</gene>
<dbReference type="EC" id="2.1.1.45" evidence="1"/>
<dbReference type="EMBL" id="CU928160">
    <property type="protein sequence ID" value="CAQ99753.1"/>
    <property type="molecule type" value="Genomic_DNA"/>
</dbReference>
<dbReference type="RefSeq" id="WP_000816232.1">
    <property type="nucleotide sequence ID" value="NC_011741.1"/>
</dbReference>
<dbReference type="SMR" id="B7LY83"/>
<dbReference type="GeneID" id="93779171"/>
<dbReference type="KEGG" id="ecr:ECIAI1_2935"/>
<dbReference type="HOGENOM" id="CLU_021669_0_0_6"/>
<dbReference type="UniPathway" id="UPA00575"/>
<dbReference type="GO" id="GO:0005829">
    <property type="term" value="C:cytosol"/>
    <property type="evidence" value="ECO:0007669"/>
    <property type="project" value="TreeGrafter"/>
</dbReference>
<dbReference type="GO" id="GO:0004799">
    <property type="term" value="F:thymidylate synthase activity"/>
    <property type="evidence" value="ECO:0007669"/>
    <property type="project" value="UniProtKB-UniRule"/>
</dbReference>
<dbReference type="GO" id="GO:0006231">
    <property type="term" value="P:dTMP biosynthetic process"/>
    <property type="evidence" value="ECO:0007669"/>
    <property type="project" value="UniProtKB-UniRule"/>
</dbReference>
<dbReference type="GO" id="GO:0006235">
    <property type="term" value="P:dTTP biosynthetic process"/>
    <property type="evidence" value="ECO:0007669"/>
    <property type="project" value="UniProtKB-UniRule"/>
</dbReference>
<dbReference type="GO" id="GO:0032259">
    <property type="term" value="P:methylation"/>
    <property type="evidence" value="ECO:0007669"/>
    <property type="project" value="UniProtKB-KW"/>
</dbReference>
<dbReference type="CDD" id="cd00351">
    <property type="entry name" value="TS_Pyrimidine_HMase"/>
    <property type="match status" value="1"/>
</dbReference>
<dbReference type="FunFam" id="3.30.572.10:FF:000001">
    <property type="entry name" value="Thymidylate synthase"/>
    <property type="match status" value="1"/>
</dbReference>
<dbReference type="Gene3D" id="3.30.572.10">
    <property type="entry name" value="Thymidylate synthase/dCMP hydroxymethylase domain"/>
    <property type="match status" value="1"/>
</dbReference>
<dbReference type="HAMAP" id="MF_00008">
    <property type="entry name" value="Thymidy_synth_bact"/>
    <property type="match status" value="1"/>
</dbReference>
<dbReference type="InterPro" id="IPR045097">
    <property type="entry name" value="Thymidate_synth/dCMP_Mease"/>
</dbReference>
<dbReference type="InterPro" id="IPR023451">
    <property type="entry name" value="Thymidate_synth/dCMP_Mease_dom"/>
</dbReference>
<dbReference type="InterPro" id="IPR036926">
    <property type="entry name" value="Thymidate_synth/dCMP_Mease_sf"/>
</dbReference>
<dbReference type="InterPro" id="IPR000398">
    <property type="entry name" value="Thymidylate_synthase"/>
</dbReference>
<dbReference type="InterPro" id="IPR020940">
    <property type="entry name" value="Thymidylate_synthase_AS"/>
</dbReference>
<dbReference type="NCBIfam" id="NF002497">
    <property type="entry name" value="PRK01827.1-3"/>
    <property type="match status" value="1"/>
</dbReference>
<dbReference type="NCBIfam" id="NF002499">
    <property type="entry name" value="PRK01827.1-5"/>
    <property type="match status" value="1"/>
</dbReference>
<dbReference type="NCBIfam" id="TIGR03284">
    <property type="entry name" value="thym_sym"/>
    <property type="match status" value="2"/>
</dbReference>
<dbReference type="PANTHER" id="PTHR11548:SF9">
    <property type="entry name" value="THYMIDYLATE SYNTHASE"/>
    <property type="match status" value="1"/>
</dbReference>
<dbReference type="PANTHER" id="PTHR11548">
    <property type="entry name" value="THYMIDYLATE SYNTHASE 1"/>
    <property type="match status" value="1"/>
</dbReference>
<dbReference type="Pfam" id="PF00303">
    <property type="entry name" value="Thymidylat_synt"/>
    <property type="match status" value="1"/>
</dbReference>
<dbReference type="PRINTS" id="PR00108">
    <property type="entry name" value="THYMDSNTHASE"/>
</dbReference>
<dbReference type="SUPFAM" id="SSF55831">
    <property type="entry name" value="Thymidylate synthase/dCMP hydroxymethylase"/>
    <property type="match status" value="1"/>
</dbReference>
<dbReference type="PROSITE" id="PS00091">
    <property type="entry name" value="THYMIDYLATE_SYNTHASE"/>
    <property type="match status" value="1"/>
</dbReference>
<organism>
    <name type="scientific">Escherichia coli O8 (strain IAI1)</name>
    <dbReference type="NCBI Taxonomy" id="585034"/>
    <lineage>
        <taxon>Bacteria</taxon>
        <taxon>Pseudomonadati</taxon>
        <taxon>Pseudomonadota</taxon>
        <taxon>Gammaproteobacteria</taxon>
        <taxon>Enterobacterales</taxon>
        <taxon>Enterobacteriaceae</taxon>
        <taxon>Escherichia</taxon>
    </lineage>
</organism>
<evidence type="ECO:0000255" key="1">
    <source>
        <dbReference type="HAMAP-Rule" id="MF_00008"/>
    </source>
</evidence>
<name>TYSY_ECO8A</name>
<reference key="1">
    <citation type="journal article" date="2009" name="PLoS Genet.">
        <title>Organised genome dynamics in the Escherichia coli species results in highly diverse adaptive paths.</title>
        <authorList>
            <person name="Touchon M."/>
            <person name="Hoede C."/>
            <person name="Tenaillon O."/>
            <person name="Barbe V."/>
            <person name="Baeriswyl S."/>
            <person name="Bidet P."/>
            <person name="Bingen E."/>
            <person name="Bonacorsi S."/>
            <person name="Bouchier C."/>
            <person name="Bouvet O."/>
            <person name="Calteau A."/>
            <person name="Chiapello H."/>
            <person name="Clermont O."/>
            <person name="Cruveiller S."/>
            <person name="Danchin A."/>
            <person name="Diard M."/>
            <person name="Dossat C."/>
            <person name="Karoui M.E."/>
            <person name="Frapy E."/>
            <person name="Garry L."/>
            <person name="Ghigo J.M."/>
            <person name="Gilles A.M."/>
            <person name="Johnson J."/>
            <person name="Le Bouguenec C."/>
            <person name="Lescat M."/>
            <person name="Mangenot S."/>
            <person name="Martinez-Jehanne V."/>
            <person name="Matic I."/>
            <person name="Nassif X."/>
            <person name="Oztas S."/>
            <person name="Petit M.A."/>
            <person name="Pichon C."/>
            <person name="Rouy Z."/>
            <person name="Ruf C.S."/>
            <person name="Schneider D."/>
            <person name="Tourret J."/>
            <person name="Vacherie B."/>
            <person name="Vallenet D."/>
            <person name="Medigue C."/>
            <person name="Rocha E.P.C."/>
            <person name="Denamur E."/>
        </authorList>
    </citation>
    <scope>NUCLEOTIDE SEQUENCE [LARGE SCALE GENOMIC DNA]</scope>
    <source>
        <strain>IAI1</strain>
    </source>
</reference>
<comment type="function">
    <text evidence="1">Catalyzes the reductive methylation of 2'-deoxyuridine-5'-monophosphate (dUMP) to 2'-deoxythymidine-5'-monophosphate (dTMP) while utilizing 5,10-methylenetetrahydrofolate (mTHF) as the methyl donor and reductant in the reaction, yielding dihydrofolate (DHF) as a by-product. This enzymatic reaction provides an intracellular de novo source of dTMP, an essential precursor for DNA biosynthesis.</text>
</comment>
<comment type="catalytic activity">
    <reaction evidence="1">
        <text>dUMP + (6R)-5,10-methylene-5,6,7,8-tetrahydrofolate = 7,8-dihydrofolate + dTMP</text>
        <dbReference type="Rhea" id="RHEA:12104"/>
        <dbReference type="ChEBI" id="CHEBI:15636"/>
        <dbReference type="ChEBI" id="CHEBI:57451"/>
        <dbReference type="ChEBI" id="CHEBI:63528"/>
        <dbReference type="ChEBI" id="CHEBI:246422"/>
        <dbReference type="EC" id="2.1.1.45"/>
    </reaction>
</comment>
<comment type="pathway">
    <text evidence="1">Pyrimidine metabolism; dTTP biosynthesis.</text>
</comment>
<comment type="subunit">
    <text evidence="1">Homodimer.</text>
</comment>
<comment type="subcellular location">
    <subcellularLocation>
        <location evidence="1">Cytoplasm</location>
    </subcellularLocation>
</comment>
<comment type="similarity">
    <text evidence="1">Belongs to the thymidylate synthase family. Bacterial-type ThyA subfamily.</text>
</comment>
<keyword id="KW-0963">Cytoplasm</keyword>
<keyword id="KW-0489">Methyltransferase</keyword>
<keyword id="KW-0545">Nucleotide biosynthesis</keyword>
<keyword id="KW-0808">Transferase</keyword>
<accession>B7LY83</accession>
<protein>
    <recommendedName>
        <fullName evidence="1">Thymidylate synthase</fullName>
        <shortName evidence="1">TS</shortName>
        <shortName evidence="1">TSase</shortName>
        <ecNumber evidence="1">2.1.1.45</ecNumber>
    </recommendedName>
</protein>
<feature type="chain" id="PRO_1000197245" description="Thymidylate synthase">
    <location>
        <begin position="1"/>
        <end position="264"/>
    </location>
</feature>
<feature type="active site" description="Nucleophile" evidence="1">
    <location>
        <position position="146"/>
    </location>
</feature>
<feature type="binding site" description="in other chain" evidence="1">
    <location>
        <position position="21"/>
    </location>
    <ligand>
        <name>dUMP</name>
        <dbReference type="ChEBI" id="CHEBI:246422"/>
        <note>ligand shared between dimeric partners</note>
    </ligand>
</feature>
<feature type="binding site" evidence="1">
    <location>
        <position position="51"/>
    </location>
    <ligand>
        <name>(6R)-5,10-methylene-5,6,7,8-tetrahydrofolate</name>
        <dbReference type="ChEBI" id="CHEBI:15636"/>
    </ligand>
</feature>
<feature type="binding site" evidence="1">
    <location>
        <begin position="126"/>
        <end position="127"/>
    </location>
    <ligand>
        <name>dUMP</name>
        <dbReference type="ChEBI" id="CHEBI:246422"/>
        <note>ligand shared between dimeric partners</note>
    </ligand>
</feature>
<feature type="binding site" description="in other chain" evidence="1">
    <location>
        <begin position="166"/>
        <end position="169"/>
    </location>
    <ligand>
        <name>dUMP</name>
        <dbReference type="ChEBI" id="CHEBI:246422"/>
        <note>ligand shared between dimeric partners</note>
    </ligand>
</feature>
<feature type="binding site" evidence="1">
    <location>
        <position position="169"/>
    </location>
    <ligand>
        <name>(6R)-5,10-methylene-5,6,7,8-tetrahydrofolate</name>
        <dbReference type="ChEBI" id="CHEBI:15636"/>
    </ligand>
</feature>
<feature type="binding site" description="in other chain" evidence="1">
    <location>
        <position position="177"/>
    </location>
    <ligand>
        <name>dUMP</name>
        <dbReference type="ChEBI" id="CHEBI:246422"/>
        <note>ligand shared between dimeric partners</note>
    </ligand>
</feature>
<feature type="binding site" description="in other chain" evidence="1">
    <location>
        <begin position="207"/>
        <end position="209"/>
    </location>
    <ligand>
        <name>dUMP</name>
        <dbReference type="ChEBI" id="CHEBI:246422"/>
        <note>ligand shared between dimeric partners</note>
    </ligand>
</feature>
<feature type="binding site" evidence="1">
    <location>
        <position position="263"/>
    </location>
    <ligand>
        <name>(6R)-5,10-methylene-5,6,7,8-tetrahydrofolate</name>
        <dbReference type="ChEBI" id="CHEBI:15636"/>
    </ligand>
</feature>
<sequence length="264" mass="30480">MKQYLELMQKVLDEGTQKNDRTGTGTLSIFGHQMRFNLQDGFPLVTTKRCHLRSIIHELLWFLQGDTNIAYLHENNVTIWDEWADENGDLGPVYGKQWRAWPTPDGRHIDQITTVLNQLKNDPDSRRIIVSAWNVGELDKMALAPCHAFFQFYVADGKLSCQLYQRSCDVFLGLPFNIASYALLVHMMAQQCDLEVGDFVWTGGDTHLYSNHMDQTHLQLSREPRPLPKLIIKRKPESIFDYRFEDFEIEGYDPHPGIKAPVAI</sequence>
<proteinExistence type="inferred from homology"/>